<proteinExistence type="evidence at transcript level"/>
<organism>
    <name type="scientific">Xenopus laevis</name>
    <name type="common">African clawed frog</name>
    <dbReference type="NCBI Taxonomy" id="8355"/>
    <lineage>
        <taxon>Eukaryota</taxon>
        <taxon>Metazoa</taxon>
        <taxon>Chordata</taxon>
        <taxon>Craniata</taxon>
        <taxon>Vertebrata</taxon>
        <taxon>Euteleostomi</taxon>
        <taxon>Amphibia</taxon>
        <taxon>Batrachia</taxon>
        <taxon>Anura</taxon>
        <taxon>Pipoidea</taxon>
        <taxon>Pipidae</taxon>
        <taxon>Xenopodinae</taxon>
        <taxon>Xenopus</taxon>
        <taxon>Xenopus</taxon>
    </lineage>
</organism>
<protein>
    <recommendedName>
        <fullName>POU domain, class 3, transcription factor 2-A</fullName>
    </recommendedName>
    <alternativeName>
        <fullName>Transcription factor POU3-A</fullName>
        <shortName>XlPOU3A</shortName>
    </alternativeName>
</protein>
<dbReference type="EMBL" id="X64835">
    <property type="protein sequence ID" value="CAA46047.1"/>
    <property type="molecule type" value="mRNA"/>
</dbReference>
<dbReference type="EMBL" id="BC041298">
    <property type="protein sequence ID" value="AAH41298.1"/>
    <property type="status" value="ALT_INIT"/>
    <property type="molecule type" value="mRNA"/>
</dbReference>
<dbReference type="EMBL" id="BC170064">
    <property type="protein sequence ID" value="AAI70064.1"/>
    <property type="molecule type" value="mRNA"/>
</dbReference>
<dbReference type="EMBL" id="BC170066">
    <property type="protein sequence ID" value="AAI70066.1"/>
    <property type="molecule type" value="mRNA"/>
</dbReference>
<dbReference type="PIR" id="S22652">
    <property type="entry name" value="S22652"/>
</dbReference>
<dbReference type="RefSeq" id="NP_001095225.1">
    <property type="nucleotide sequence ID" value="NM_001101755.1"/>
</dbReference>
<dbReference type="SMR" id="P31365"/>
<dbReference type="GeneID" id="394422"/>
<dbReference type="KEGG" id="xla:394422"/>
<dbReference type="AGR" id="Xenbase:XB-GENE-6254215"/>
<dbReference type="CTD" id="394422"/>
<dbReference type="Xenbase" id="XB-GENE-6254215">
    <property type="gene designation" value="pou3f2.S"/>
</dbReference>
<dbReference type="OrthoDB" id="6358449at2759"/>
<dbReference type="Proteomes" id="UP000186698">
    <property type="component" value="Chromosome 5S"/>
</dbReference>
<dbReference type="Bgee" id="394422">
    <property type="expression patterns" value="Expressed in neurula embryo and 7 other cell types or tissues"/>
</dbReference>
<dbReference type="GO" id="GO:0005634">
    <property type="term" value="C:nucleus"/>
    <property type="evidence" value="ECO:0007669"/>
    <property type="project" value="UniProtKB-SubCell"/>
</dbReference>
<dbReference type="GO" id="GO:0000981">
    <property type="term" value="F:DNA-binding transcription factor activity, RNA polymerase II-specific"/>
    <property type="evidence" value="ECO:0000318"/>
    <property type="project" value="GO_Central"/>
</dbReference>
<dbReference type="GO" id="GO:0000978">
    <property type="term" value="F:RNA polymerase II cis-regulatory region sequence-specific DNA binding"/>
    <property type="evidence" value="ECO:0000318"/>
    <property type="project" value="GO_Central"/>
</dbReference>
<dbReference type="GO" id="GO:0007420">
    <property type="term" value="P:brain development"/>
    <property type="evidence" value="ECO:0007669"/>
    <property type="project" value="InterPro"/>
</dbReference>
<dbReference type="GO" id="GO:0006357">
    <property type="term" value="P:regulation of transcription by RNA polymerase II"/>
    <property type="evidence" value="ECO:0000318"/>
    <property type="project" value="GO_Central"/>
</dbReference>
<dbReference type="CDD" id="cd00086">
    <property type="entry name" value="homeodomain"/>
    <property type="match status" value="1"/>
</dbReference>
<dbReference type="FunFam" id="1.10.10.60:FF:000005">
    <property type="entry name" value="POU domain protein"/>
    <property type="match status" value="1"/>
</dbReference>
<dbReference type="FunFam" id="1.10.260.40:FF:000001">
    <property type="entry name" value="POU domain protein"/>
    <property type="match status" value="1"/>
</dbReference>
<dbReference type="Gene3D" id="1.10.10.60">
    <property type="entry name" value="Homeodomain-like"/>
    <property type="match status" value="1"/>
</dbReference>
<dbReference type="Gene3D" id="1.10.260.40">
    <property type="entry name" value="lambda repressor-like DNA-binding domains"/>
    <property type="match status" value="1"/>
</dbReference>
<dbReference type="InterPro" id="IPR001356">
    <property type="entry name" value="HD"/>
</dbReference>
<dbReference type="InterPro" id="IPR017970">
    <property type="entry name" value="Homeobox_CS"/>
</dbReference>
<dbReference type="InterPro" id="IPR009057">
    <property type="entry name" value="Homeodomain-like_sf"/>
</dbReference>
<dbReference type="InterPro" id="IPR010982">
    <property type="entry name" value="Lambda_DNA-bd_dom_sf"/>
</dbReference>
<dbReference type="InterPro" id="IPR013847">
    <property type="entry name" value="POU"/>
</dbReference>
<dbReference type="InterPro" id="IPR000327">
    <property type="entry name" value="POU_dom"/>
</dbReference>
<dbReference type="InterPro" id="IPR050255">
    <property type="entry name" value="POU_domain_TF"/>
</dbReference>
<dbReference type="InterPro" id="IPR016362">
    <property type="entry name" value="TF_POU_3"/>
</dbReference>
<dbReference type="PANTHER" id="PTHR11636">
    <property type="entry name" value="POU DOMAIN"/>
    <property type="match status" value="1"/>
</dbReference>
<dbReference type="PANTHER" id="PTHR11636:SF115">
    <property type="entry name" value="POU DOMAIN, CLASS 3, TRANSCRIPTION FACTOR 2"/>
    <property type="match status" value="1"/>
</dbReference>
<dbReference type="Pfam" id="PF00046">
    <property type="entry name" value="Homeodomain"/>
    <property type="match status" value="1"/>
</dbReference>
<dbReference type="Pfam" id="PF00157">
    <property type="entry name" value="Pou"/>
    <property type="match status" value="1"/>
</dbReference>
<dbReference type="PIRSF" id="PIRSF002629">
    <property type="entry name" value="Transcription_factor_POU"/>
    <property type="match status" value="1"/>
</dbReference>
<dbReference type="PRINTS" id="PR00028">
    <property type="entry name" value="POUDOMAIN"/>
</dbReference>
<dbReference type="SMART" id="SM00389">
    <property type="entry name" value="HOX"/>
    <property type="match status" value="1"/>
</dbReference>
<dbReference type="SMART" id="SM00352">
    <property type="entry name" value="POU"/>
    <property type="match status" value="1"/>
</dbReference>
<dbReference type="SUPFAM" id="SSF46689">
    <property type="entry name" value="Homeodomain-like"/>
    <property type="match status" value="1"/>
</dbReference>
<dbReference type="SUPFAM" id="SSF47413">
    <property type="entry name" value="lambda repressor-like DNA-binding domains"/>
    <property type="match status" value="1"/>
</dbReference>
<dbReference type="PROSITE" id="PS00027">
    <property type="entry name" value="HOMEOBOX_1"/>
    <property type="match status" value="1"/>
</dbReference>
<dbReference type="PROSITE" id="PS50071">
    <property type="entry name" value="HOMEOBOX_2"/>
    <property type="match status" value="1"/>
</dbReference>
<dbReference type="PROSITE" id="PS00035">
    <property type="entry name" value="POU_1"/>
    <property type="match status" value="1"/>
</dbReference>
<dbReference type="PROSITE" id="PS00465">
    <property type="entry name" value="POU_2"/>
    <property type="match status" value="1"/>
</dbReference>
<dbReference type="PROSITE" id="PS51179">
    <property type="entry name" value="POU_3"/>
    <property type="match status" value="1"/>
</dbReference>
<name>P3F2A_XENLA</name>
<feature type="chain" id="PRO_0000100725" description="POU domain, class 3, transcription factor 2-A">
    <location>
        <begin position="1"/>
        <end position="382"/>
    </location>
</feature>
<feature type="domain" description="POU-specific" evidence="3">
    <location>
        <begin position="201"/>
        <end position="275"/>
    </location>
</feature>
<feature type="DNA-binding region" description="Homeobox" evidence="2">
    <location>
        <begin position="293"/>
        <end position="352"/>
    </location>
</feature>
<feature type="region of interest" description="Disordered" evidence="4">
    <location>
        <begin position="69"/>
        <end position="136"/>
    </location>
</feature>
<feature type="region of interest" description="Disordered" evidence="4">
    <location>
        <begin position="150"/>
        <end position="206"/>
    </location>
</feature>
<feature type="region of interest" description="Disordered" evidence="4">
    <location>
        <begin position="348"/>
        <end position="382"/>
    </location>
</feature>
<feature type="compositionally biased region" description="Polar residues" evidence="4">
    <location>
        <begin position="122"/>
        <end position="136"/>
    </location>
</feature>
<feature type="compositionally biased region" description="Basic and acidic residues" evidence="4">
    <location>
        <begin position="165"/>
        <end position="178"/>
    </location>
</feature>
<feature type="compositionally biased region" description="Low complexity" evidence="4">
    <location>
        <begin position="179"/>
        <end position="194"/>
    </location>
</feature>
<feature type="sequence conflict" description="In Ref. 3; AAH41298." evidence="6" ref="3">
    <original>P</original>
    <variation>T</variation>
    <location>
        <position position="154"/>
    </location>
</feature>
<feature type="sequence conflict" description="In Ref. 1; CAA46047." evidence="6" ref="1">
    <original>F</original>
    <variation>C</variation>
    <location>
        <position position="341"/>
    </location>
</feature>
<accession>P31365</accession>
<accession>B7ZR71</accession>
<accession>Q8AVS5</accession>
<gene>
    <name type="primary">pou3f2-a</name>
    <name type="synonym">pou3</name>
    <name type="synonym">pou3a</name>
    <name type="synonym">pou3f2</name>
</gene>
<evidence type="ECO:0000250" key="1"/>
<evidence type="ECO:0000255" key="2">
    <source>
        <dbReference type="PROSITE-ProRule" id="PRU00108"/>
    </source>
</evidence>
<evidence type="ECO:0000255" key="3">
    <source>
        <dbReference type="PROSITE-ProRule" id="PRU00530"/>
    </source>
</evidence>
<evidence type="ECO:0000256" key="4">
    <source>
        <dbReference type="SAM" id="MobiDB-lite"/>
    </source>
</evidence>
<evidence type="ECO:0000269" key="5">
    <source>
    </source>
</evidence>
<evidence type="ECO:0000305" key="6"/>
<reference key="1">
    <citation type="journal article" date="1992" name="Nucleic Acids Res.">
        <title>Nucleotide sequence of XLPOU3 cDNA, a member of the POU domain gene family expressed in Xenopus laevis embryos.</title>
        <authorList>
            <person name="Baltzinger M."/>
            <person name="Payen E."/>
            <person name="Remy P."/>
        </authorList>
    </citation>
    <scope>NUCLEOTIDE SEQUENCE [MRNA]</scope>
    <source>
        <tissue>Neurula</tissue>
    </source>
</reference>
<reference key="2">
    <citation type="journal article" date="1996" name="Mech. Dev.">
        <title>Transcription of XLPOU3, a brain-specific gene, during Xenopus laevis early embryogenesis.</title>
        <authorList>
            <person name="Baltzinger M."/>
            <person name="Relaix F."/>
            <person name="Remy P."/>
        </authorList>
    </citation>
    <scope>NUCLEOTIDE SEQUENCE [GENOMIC DNA]</scope>
    <scope>TISSUE SPECIFICITY</scope>
    <scope>DEVELOPMENTAL STAGE</scope>
</reference>
<reference key="3">
    <citation type="submission" date="2008-11" db="EMBL/GenBank/DDBJ databases">
        <authorList>
            <consortium name="NIH - Xenopus Gene Collection (XGC) project"/>
        </authorList>
    </citation>
    <scope>NUCLEOTIDE SEQUENCE [LARGE SCALE MRNA]</scope>
    <source>
        <tissue>Gastrula</tissue>
        <tissue>Tail bud</tissue>
    </source>
</reference>
<comment type="function">
    <text evidence="1">Transcription factor that may be implicated in patterning of the central nervous system during early development.</text>
</comment>
<comment type="subcellular location">
    <subcellularLocation>
        <location>Nucleus</location>
    </subcellularLocation>
</comment>
<comment type="tissue specificity">
    <text evidence="5">Expressed in the developing brain and spinal cord. Also found in a restricted region of the auditory vesicle during development. In the adult, expression is restricted to the brain.</text>
</comment>
<comment type="developmental stage">
    <text evidence="5">First expressed at the neurula stage.</text>
</comment>
<comment type="similarity">
    <text evidence="6">Belongs to the POU transcription factor family. Class-3 subfamily.</text>
</comment>
<comment type="sequence caution" evidence="6">
    <conflict type="erroneous initiation">
        <sequence resource="EMBL-CDS" id="AAH41298"/>
    </conflict>
</comment>
<sequence>MATTASNHYNLLGSGSSIVHADPGGMQQAQSYRDAQTLVQSDYTLQSNGHPLSHAHQWITALSHGDGAPWATSPLGQQDIKPTVQSSRDELHVSGTLQHQSRAPHLVHPAHGNHHGPGAWRSTGSTHLSSMASSNGQGLLYSQPSFTVNGMINPGSGQGIHHHGLRDSHDDHHGDHGHQQVSQAQQQHSQLQGGHQDHSDEDTPTSDDLEQFAKQFKQRRIKLGFTQADVGLALGTLYGNVFSQTTICRFEALQLSFKNMCKLKPLLNKWLEEADSSSGSPTSIDKIAAQGRKRKKRTSIEVSVKGALESHFLKCPKPSAPEITSLADSLQLEKEVVRVWFCNRRQKEKRMTPPGGTIPGAEDIYGASRDTPPHLGVQTSVQ</sequence>
<keyword id="KW-0217">Developmental protein</keyword>
<keyword id="KW-0238">DNA-binding</keyword>
<keyword id="KW-0371">Homeobox</keyword>
<keyword id="KW-0539">Nucleus</keyword>
<keyword id="KW-1185">Reference proteome</keyword>
<keyword id="KW-0804">Transcription</keyword>
<keyword id="KW-0805">Transcription regulation</keyword>